<sequence length="443" mass="48737">MFISVLLILFALCVTLIPEAHYHMVRVWSFVATIIPMWVVTWMWWNFDASGHGLQMLVILGRSHLAFGIDGVALSLMLLTTVLFPICMMLLRTVAGFMTFILLEVLVLSALCVLDLLGFYILFEASLILLFLLIGRAPYGSLEAAYKIVLYTMAGSLVLLPTLFMIYSECGTTNVLYMTCAYNHQTVLGWGLLAVLAVKIPLMPVHLWLPEAHVAAPTAGSVLLAGVLLKLGGIGFLRFMLPVVPEFCVSVFPLVSTLCLVSFLFSTLSTLRQIDLKKIVAYSSIAHMSMVTLAIFSQSEFSAYSSSFLMIAHGLISPALFLIVGILYDRAHTKFILYFSGLGASMPIGSTLFFLFTLGNLAFPLFPNFIAEVLCMVSIFAVHELLAYVFCVCQVLGAAYGFWAFNRVVHGLPRGPADVTRTEFHTVLPLLIGAVWLGIKPMA</sequence>
<accession>P20113</accession>
<dbReference type="EC" id="7.1.1.2"/>
<dbReference type="EMBL" id="X54860">
    <property type="protein sequence ID" value="CAA38640.1"/>
    <property type="molecule type" value="Genomic_DNA"/>
</dbReference>
<dbReference type="EMBL" id="X66484">
    <property type="protein sequence ID" value="CAA47112.1"/>
    <property type="molecule type" value="Genomic_DNA"/>
</dbReference>
<dbReference type="EMBL" id="X03464">
    <property type="protein sequence ID" value="CAA27182.1"/>
    <property type="molecule type" value="Genomic_DNA"/>
</dbReference>
<dbReference type="EMBL" id="U03843">
    <property type="protein sequence ID" value="AAB93441.1"/>
    <property type="molecule type" value="Genomic_DNA"/>
</dbReference>
<dbReference type="PIR" id="A48333">
    <property type="entry name" value="S37612"/>
</dbReference>
<dbReference type="RefSeq" id="NP_042565.1">
    <property type="nucleotide sequence ID" value="NC_001638.1"/>
</dbReference>
<dbReference type="PDB" id="9F5X">
    <property type="method" value="EM"/>
    <property type="resolution" value="2.82 A"/>
    <property type="chains" value="T=1-443"/>
</dbReference>
<dbReference type="PDB" id="9F5Y">
    <property type="method" value="EM"/>
    <property type="resolution" value="2.51 A"/>
    <property type="chains" value="T=1-443"/>
</dbReference>
<dbReference type="PDB" id="9F62">
    <property type="method" value="EM"/>
    <property type="resolution" value="5.44 A"/>
    <property type="chains" value="5T/T=1-443"/>
</dbReference>
<dbReference type="PDBsum" id="9F5X"/>
<dbReference type="PDBsum" id="9F5Y"/>
<dbReference type="PDBsum" id="9F62"/>
<dbReference type="EMDB" id="EMD-50202"/>
<dbReference type="EMDB" id="EMD-50203"/>
<dbReference type="EMDB" id="EMD-50210"/>
<dbReference type="SMR" id="P20113"/>
<dbReference type="TCDB" id="3.D.1.6.4">
    <property type="family name" value="the h+ or na+-translocating nadh dehydrogenase (ndh) family"/>
</dbReference>
<dbReference type="PaxDb" id="3055-AAB93441"/>
<dbReference type="GeneID" id="801494"/>
<dbReference type="KEGG" id="cre:ChrepMp02"/>
<dbReference type="eggNOG" id="KOG4845">
    <property type="taxonomic scope" value="Eukaryota"/>
</dbReference>
<dbReference type="HOGENOM" id="CLU_007100_4_4_1"/>
<dbReference type="BioCyc" id="CHLAMY:CHREPMP02-MONOMER"/>
<dbReference type="GO" id="GO:0031966">
    <property type="term" value="C:mitochondrial membrane"/>
    <property type="evidence" value="ECO:0007669"/>
    <property type="project" value="UniProtKB-SubCell"/>
</dbReference>
<dbReference type="GO" id="GO:0008137">
    <property type="term" value="F:NADH dehydrogenase (ubiquinone) activity"/>
    <property type="evidence" value="ECO:0007669"/>
    <property type="project" value="UniProtKB-EC"/>
</dbReference>
<dbReference type="GO" id="GO:0042773">
    <property type="term" value="P:ATP synthesis coupled electron transport"/>
    <property type="evidence" value="ECO:0007669"/>
    <property type="project" value="InterPro"/>
</dbReference>
<dbReference type="InterPro" id="IPR010227">
    <property type="entry name" value="NADH_Q_OxRdtase_chainM/4"/>
</dbReference>
<dbReference type="InterPro" id="IPR003918">
    <property type="entry name" value="NADH_UbQ_OxRdtase"/>
</dbReference>
<dbReference type="InterPro" id="IPR001750">
    <property type="entry name" value="ND/Mrp_TM"/>
</dbReference>
<dbReference type="NCBIfam" id="TIGR01972">
    <property type="entry name" value="NDH_I_M"/>
    <property type="match status" value="1"/>
</dbReference>
<dbReference type="PANTHER" id="PTHR43507">
    <property type="entry name" value="NADH-UBIQUINONE OXIDOREDUCTASE CHAIN 4"/>
    <property type="match status" value="1"/>
</dbReference>
<dbReference type="PANTHER" id="PTHR43507:SF1">
    <property type="entry name" value="NADH-UBIQUINONE OXIDOREDUCTASE CHAIN 4"/>
    <property type="match status" value="1"/>
</dbReference>
<dbReference type="Pfam" id="PF00361">
    <property type="entry name" value="Proton_antipo_M"/>
    <property type="match status" value="1"/>
</dbReference>
<dbReference type="PRINTS" id="PR01437">
    <property type="entry name" value="NUOXDRDTASE4"/>
</dbReference>
<geneLocation type="mitochondrion"/>
<proteinExistence type="evidence at protein level"/>
<protein>
    <recommendedName>
        <fullName>NADH-ubiquinone oxidoreductase chain 4</fullName>
        <ecNumber>7.1.1.2</ecNumber>
    </recommendedName>
    <alternativeName>
        <fullName>NADH dehydrogenase subunit 4</fullName>
    </alternativeName>
</protein>
<comment type="function">
    <text evidence="1">Core subunit of the mitochondrial membrane respiratory chain NADH dehydrogenase (Complex I) that is believed to belong to the minimal assembly required for catalysis. Complex I functions in the transfer of electrons from NADH to the respiratory chain. The immediate electron acceptor for the enzyme is believed to be ubiquinone (By similarity).</text>
</comment>
<comment type="catalytic activity">
    <reaction>
        <text>a ubiquinone + NADH + 5 H(+)(in) = a ubiquinol + NAD(+) + 4 H(+)(out)</text>
        <dbReference type="Rhea" id="RHEA:29091"/>
        <dbReference type="Rhea" id="RHEA-COMP:9565"/>
        <dbReference type="Rhea" id="RHEA-COMP:9566"/>
        <dbReference type="ChEBI" id="CHEBI:15378"/>
        <dbReference type="ChEBI" id="CHEBI:16389"/>
        <dbReference type="ChEBI" id="CHEBI:17976"/>
        <dbReference type="ChEBI" id="CHEBI:57540"/>
        <dbReference type="ChEBI" id="CHEBI:57945"/>
        <dbReference type="EC" id="7.1.1.2"/>
    </reaction>
</comment>
<comment type="subcellular location">
    <subcellularLocation>
        <location evidence="1">Mitochondrion membrane</location>
        <topology evidence="1">Multi-pass membrane protein</topology>
    </subcellularLocation>
</comment>
<comment type="similarity">
    <text evidence="3">Belongs to the complex I subunit 4 family.</text>
</comment>
<keyword id="KW-0002">3D-structure</keyword>
<keyword id="KW-0249">Electron transport</keyword>
<keyword id="KW-0472">Membrane</keyword>
<keyword id="KW-0496">Mitochondrion</keyword>
<keyword id="KW-0520">NAD</keyword>
<keyword id="KW-0679">Respiratory chain</keyword>
<keyword id="KW-1278">Translocase</keyword>
<keyword id="KW-0812">Transmembrane</keyword>
<keyword id="KW-1133">Transmembrane helix</keyword>
<keyword id="KW-0813">Transport</keyword>
<keyword id="KW-0830">Ubiquinone</keyword>
<evidence type="ECO:0000250" key="1"/>
<evidence type="ECO:0000255" key="2"/>
<evidence type="ECO:0000305" key="3"/>
<gene>
    <name type="primary">ND4</name>
    <name type="synonym">NAD4</name>
</gene>
<organism>
    <name type="scientific">Chlamydomonas reinhardtii</name>
    <name type="common">Chlamydomonas smithii</name>
    <dbReference type="NCBI Taxonomy" id="3055"/>
    <lineage>
        <taxon>Eukaryota</taxon>
        <taxon>Viridiplantae</taxon>
        <taxon>Chlorophyta</taxon>
        <taxon>core chlorophytes</taxon>
        <taxon>Chlorophyceae</taxon>
        <taxon>CS clade</taxon>
        <taxon>Chlamydomonadales</taxon>
        <taxon>Chlamydomonadaceae</taxon>
        <taxon>Chlamydomonas</taxon>
    </lineage>
</organism>
<reference key="1">
    <citation type="journal article" date="1991" name="Curr. Genet.">
        <title>Short dispersed repeats localized in spacer regions of Chlamydomonas reinhardtii mitochondrial DNA.</title>
        <authorList>
            <person name="Boer P.H."/>
            <person name="Gray M.W."/>
        </authorList>
    </citation>
    <scope>NUCLEOTIDE SEQUENCE [GENOMIC DNA]</scope>
    <source>
        <strain>cw15</strain>
    </source>
</reference>
<reference key="2">
    <citation type="journal article" date="1989" name="Gene">
        <title>Nucleotide sequence of cloned nad4 (urf4) gene from Chlamydomonas reinhardtii mitochondrial DNA.</title>
        <authorList>
            <person name="Ma D.-P."/>
            <person name="Yang Y.-W."/>
            <person name="King Y.T."/>
            <person name="Hasnain S.E."/>
        </authorList>
    </citation>
    <scope>NUCLEOTIDE SEQUENCE [GENOMIC DNA]</scope>
    <source>
        <strain>cw15</strain>
    </source>
</reference>
<reference key="3">
    <citation type="journal article" date="1989" name="Curr. Genet.">
        <title>Mitochondrial DNA of Chlamydomonas reinhardtii: the ND4 gene encoding a subunit of NADH dehydrogenase.</title>
        <authorList>
            <person name="Pratje E."/>
            <person name="Vahrenholz C."/>
            <person name="Buehler S."/>
            <person name="Michaelis G."/>
        </authorList>
    </citation>
    <scope>NUCLEOTIDE SEQUENCE [GENOMIC DNA]</scope>
    <source>
        <strain>cw15</strain>
    </source>
</reference>
<reference key="4">
    <citation type="journal article" date="1986" name="EMBO J.">
        <title>The URF 5 gene of Chlamydomonas reinhardtii mitochondria: DNA sequence and mode of transcription.</title>
        <authorList>
            <person name="Boer P.H."/>
            <person name="Gray M.W."/>
        </authorList>
    </citation>
    <scope>NUCLEOTIDE SEQUENCE [GENOMIC DNA] OF 1-75</scope>
</reference>
<reference key="5">
    <citation type="journal article" date="1985" name="Mol. Gen. Genet.">
        <title>Mitochondrial DNA of Chlamydomonas reinhardtii: sequence and arrangement of URF5 and the gene for cytochrome oxidase subunit I.</title>
        <authorList>
            <person name="Vahrenholz C."/>
            <person name="Pratje E."/>
            <person name="Michaelis G."/>
            <person name="Dujon B."/>
        </authorList>
    </citation>
    <scope>NUCLEOTIDE SEQUENCE [GENOMIC DNA] OF 373-443</scope>
    <source>
        <strain>cw15</strain>
    </source>
</reference>
<name>NU4M_CHLRE</name>
<feature type="chain" id="PRO_0000117921" description="NADH-ubiquinone oxidoreductase chain 4">
    <location>
        <begin position="1"/>
        <end position="443"/>
    </location>
</feature>
<feature type="transmembrane region" description="Helical" evidence="2">
    <location>
        <begin position="1"/>
        <end position="21"/>
    </location>
</feature>
<feature type="transmembrane region" description="Helical" evidence="2">
    <location>
        <begin position="27"/>
        <end position="47"/>
    </location>
</feature>
<feature type="transmembrane region" description="Helical" evidence="2">
    <location>
        <begin position="71"/>
        <end position="91"/>
    </location>
</feature>
<feature type="transmembrane region" description="Helical" evidence="2">
    <location>
        <begin position="93"/>
        <end position="113"/>
    </location>
</feature>
<feature type="transmembrane region" description="Helical" evidence="2">
    <location>
        <begin position="114"/>
        <end position="134"/>
    </location>
</feature>
<feature type="transmembrane region" description="Helical" evidence="2">
    <location>
        <begin position="148"/>
        <end position="168"/>
    </location>
</feature>
<feature type="transmembrane region" description="Helical" evidence="2">
    <location>
        <begin position="187"/>
        <end position="207"/>
    </location>
</feature>
<feature type="transmembrane region" description="Helical" evidence="2">
    <location>
        <begin position="217"/>
        <end position="237"/>
    </location>
</feature>
<feature type="transmembrane region" description="Helical" evidence="2">
    <location>
        <begin position="247"/>
        <end position="267"/>
    </location>
</feature>
<feature type="transmembrane region" description="Helical" evidence="2">
    <location>
        <begin position="279"/>
        <end position="299"/>
    </location>
</feature>
<feature type="transmembrane region" description="Helical" evidence="2">
    <location>
        <begin position="308"/>
        <end position="328"/>
    </location>
</feature>
<feature type="transmembrane region" description="Helical" evidence="2">
    <location>
        <begin position="335"/>
        <end position="355"/>
    </location>
</feature>
<feature type="transmembrane region" description="Helical" evidence="2">
    <location>
        <begin position="362"/>
        <end position="382"/>
    </location>
</feature>
<feature type="transmembrane region" description="Helical" evidence="2">
    <location>
        <begin position="385"/>
        <end position="405"/>
    </location>
</feature>
<feature type="transmembrane region" description="Helical" evidence="2">
    <location>
        <begin position="423"/>
        <end position="443"/>
    </location>
</feature>